<feature type="chain" id="PRO_0000173980" description="Protein MucB">
    <location>
        <begin position="1"/>
        <end position="421"/>
    </location>
</feature>
<feature type="domain" description="UmuC" evidence="1">
    <location>
        <begin position="2"/>
        <end position="187"/>
    </location>
</feature>
<sequence length="421" mass="46432">MFALIDVNGMYASCEQAFRPDLANRAVAVLSNNDGNIVARNYLAKKAGLKMGDPYFKVRPIIERHNIAIFSSNYTLYASMSARFAAVVESLASHVEQYSIDELFVDCKGITAAMSLDAFGRQLREEVRRHTTLVCGVGIARTKTLAKLCNHAAKTWPATGGVVALDDGARLKKLMSILPVAEVWGVGHRTEKALATMGIKTVLDLARADTRLIRKTFGVVLERTVRELRGEACFSLEENPPAKQQIVVSRSFGQRVETLTDMQQAVTGFAARAAEKLRNERQYCRVISVFIRTSPYSVRDTQYANQATEKLTVATQDSRTIIQAAQAALARIWREDIAYAKAGVMLADFSGKEAQLDLFDSATPSAGSEALMAVLDGINRRGKNQLFFAGQGIDNSFAMRRQMLSPDYTTDWRSIPIATIK</sequence>
<proteinExistence type="inferred from homology"/>
<keyword id="KW-0227">DNA damage</keyword>
<keyword id="KW-0234">DNA repair</keyword>
<keyword id="KW-0614">Plasmid</keyword>
<keyword id="KW-0741">SOS mutagenesis</keyword>
<keyword id="KW-0742">SOS response</keyword>
<gene>
    <name type="primary">mucB</name>
</gene>
<protein>
    <recommendedName>
        <fullName>Protein MucB</fullName>
    </recommendedName>
</protein>
<organism>
    <name type="scientific">Salmonella typhimurium</name>
    <dbReference type="NCBI Taxonomy" id="90371"/>
    <lineage>
        <taxon>Bacteria</taxon>
        <taxon>Pseudomonadati</taxon>
        <taxon>Pseudomonadota</taxon>
        <taxon>Gammaproteobacteria</taxon>
        <taxon>Enterobacterales</taxon>
        <taxon>Enterobacteriaceae</taxon>
        <taxon>Salmonella</taxon>
    </lineage>
</organism>
<comment type="function">
    <text>Involved in UV protection and mutation.</text>
</comment>
<comment type="miscellaneous">
    <text>The mucAB operon is the plasmid-borne analog of the E.coli umuDC operon.</text>
</comment>
<comment type="similarity">
    <text evidence="2">Belongs to the DNA polymerase type-Y family.</text>
</comment>
<name>MUCB_SALTM</name>
<reference key="1">
    <citation type="submission" date="1989-09" db="EMBL/GenBank/DDBJ databases">
        <authorList>
            <person name="Hall R.M."/>
            <person name="Vockler C."/>
        </authorList>
    </citation>
    <scope>NUCLEOTIDE SEQUENCE [GENOMIC DNA]</scope>
</reference>
<geneLocation type="plasmid">
    <name>IncN R46</name>
</geneLocation>
<evidence type="ECO:0000255" key="1">
    <source>
        <dbReference type="PROSITE-ProRule" id="PRU00216"/>
    </source>
</evidence>
<evidence type="ECO:0000305" key="2"/>
<dbReference type="EMBL" id="X16596">
    <property type="protein sequence ID" value="CAA34607.1"/>
    <property type="molecule type" value="Genomic_DNA"/>
</dbReference>
<dbReference type="PIR" id="S06776">
    <property type="entry name" value="S06776"/>
</dbReference>
<dbReference type="RefSeq" id="NP_511217.1">
    <property type="nucleotide sequence ID" value="NC_003292.1"/>
</dbReference>
<dbReference type="RefSeq" id="WP_000457702.1">
    <property type="nucleotide sequence ID" value="NZ_RQPP01000027.1"/>
</dbReference>
<dbReference type="SMR" id="P14303"/>
<dbReference type="GeneID" id="76525242"/>
<dbReference type="GO" id="GO:0005829">
    <property type="term" value="C:cytosol"/>
    <property type="evidence" value="ECO:0007669"/>
    <property type="project" value="TreeGrafter"/>
</dbReference>
<dbReference type="GO" id="GO:0003684">
    <property type="term" value="F:damaged DNA binding"/>
    <property type="evidence" value="ECO:0007669"/>
    <property type="project" value="InterPro"/>
</dbReference>
<dbReference type="GO" id="GO:0003887">
    <property type="term" value="F:DNA-directed DNA polymerase activity"/>
    <property type="evidence" value="ECO:0007669"/>
    <property type="project" value="TreeGrafter"/>
</dbReference>
<dbReference type="GO" id="GO:0042276">
    <property type="term" value="P:error-prone translesion synthesis"/>
    <property type="evidence" value="ECO:0007669"/>
    <property type="project" value="TreeGrafter"/>
</dbReference>
<dbReference type="GO" id="GO:0009432">
    <property type="term" value="P:SOS response"/>
    <property type="evidence" value="ECO:0007669"/>
    <property type="project" value="UniProtKB-KW"/>
</dbReference>
<dbReference type="CDD" id="cd01700">
    <property type="entry name" value="PolY_Pol_V_umuC"/>
    <property type="match status" value="1"/>
</dbReference>
<dbReference type="Gene3D" id="3.30.70.270">
    <property type="match status" value="1"/>
</dbReference>
<dbReference type="Gene3D" id="3.40.1170.60">
    <property type="match status" value="1"/>
</dbReference>
<dbReference type="Gene3D" id="1.10.150.20">
    <property type="entry name" value="5' to 3' exonuclease, C-terminal subdomain"/>
    <property type="match status" value="1"/>
</dbReference>
<dbReference type="Gene3D" id="3.30.1490.100">
    <property type="entry name" value="DNA polymerase, Y-family, little finger domain"/>
    <property type="match status" value="1"/>
</dbReference>
<dbReference type="InterPro" id="IPR043502">
    <property type="entry name" value="DNA/RNA_pol_sf"/>
</dbReference>
<dbReference type="InterPro" id="IPR036775">
    <property type="entry name" value="DNA_pol_Y-fam_lit_finger_sf"/>
</dbReference>
<dbReference type="InterPro" id="IPR017961">
    <property type="entry name" value="DNA_pol_Y-fam_little_finger"/>
</dbReference>
<dbReference type="InterPro" id="IPR050116">
    <property type="entry name" value="DNA_polymerase-Y"/>
</dbReference>
<dbReference type="InterPro" id="IPR025188">
    <property type="entry name" value="DUF4113"/>
</dbReference>
<dbReference type="InterPro" id="IPR043128">
    <property type="entry name" value="Rev_trsase/Diguanyl_cyclase"/>
</dbReference>
<dbReference type="InterPro" id="IPR001126">
    <property type="entry name" value="UmuC"/>
</dbReference>
<dbReference type="NCBIfam" id="NF002955">
    <property type="entry name" value="PRK03609.1"/>
    <property type="match status" value="1"/>
</dbReference>
<dbReference type="PANTHER" id="PTHR11076">
    <property type="entry name" value="DNA REPAIR POLYMERASE UMUC / TRANSFERASE FAMILY MEMBER"/>
    <property type="match status" value="1"/>
</dbReference>
<dbReference type="PANTHER" id="PTHR11076:SF34">
    <property type="entry name" value="PROTEIN UMUC"/>
    <property type="match status" value="1"/>
</dbReference>
<dbReference type="Pfam" id="PF13438">
    <property type="entry name" value="DUF4113"/>
    <property type="match status" value="1"/>
</dbReference>
<dbReference type="Pfam" id="PF00817">
    <property type="entry name" value="IMS"/>
    <property type="match status" value="1"/>
</dbReference>
<dbReference type="Pfam" id="PF11799">
    <property type="entry name" value="IMS_C"/>
    <property type="match status" value="1"/>
</dbReference>
<dbReference type="SUPFAM" id="SSF56672">
    <property type="entry name" value="DNA/RNA polymerases"/>
    <property type="match status" value="1"/>
</dbReference>
<dbReference type="SUPFAM" id="SSF100879">
    <property type="entry name" value="Lesion bypass DNA polymerase (Y-family), little finger domain"/>
    <property type="match status" value="1"/>
</dbReference>
<dbReference type="PROSITE" id="PS50173">
    <property type="entry name" value="UMUC"/>
    <property type="match status" value="1"/>
</dbReference>
<accession>P14303</accession>